<organism>
    <name type="scientific">Rhodopseudomonas palustris (strain HaA2)</name>
    <dbReference type="NCBI Taxonomy" id="316058"/>
    <lineage>
        <taxon>Bacteria</taxon>
        <taxon>Pseudomonadati</taxon>
        <taxon>Pseudomonadota</taxon>
        <taxon>Alphaproteobacteria</taxon>
        <taxon>Hyphomicrobiales</taxon>
        <taxon>Nitrobacteraceae</taxon>
        <taxon>Rhodopseudomonas</taxon>
    </lineage>
</organism>
<proteinExistence type="inferred from homology"/>
<accession>Q2IXG7</accession>
<reference key="1">
    <citation type="submission" date="2006-01" db="EMBL/GenBank/DDBJ databases">
        <title>Complete sequence of Rhodopseudomonas palustris HaA2.</title>
        <authorList>
            <consortium name="US DOE Joint Genome Institute"/>
            <person name="Copeland A."/>
            <person name="Lucas S."/>
            <person name="Lapidus A."/>
            <person name="Barry K."/>
            <person name="Detter J.C."/>
            <person name="Glavina T."/>
            <person name="Hammon N."/>
            <person name="Israni S."/>
            <person name="Pitluck S."/>
            <person name="Chain P."/>
            <person name="Malfatti S."/>
            <person name="Shin M."/>
            <person name="Vergez L."/>
            <person name="Schmutz J."/>
            <person name="Larimer F."/>
            <person name="Land M."/>
            <person name="Hauser L."/>
            <person name="Pelletier D.A."/>
            <person name="Kyrpides N."/>
            <person name="Anderson I."/>
            <person name="Oda Y."/>
            <person name="Harwood C.S."/>
            <person name="Richardson P."/>
        </authorList>
    </citation>
    <scope>NUCLEOTIDE SEQUENCE [LARGE SCALE GENOMIC DNA]</scope>
    <source>
        <strain>HaA2</strain>
    </source>
</reference>
<name>PANC_RHOP2</name>
<keyword id="KW-0067">ATP-binding</keyword>
<keyword id="KW-0963">Cytoplasm</keyword>
<keyword id="KW-0436">Ligase</keyword>
<keyword id="KW-0547">Nucleotide-binding</keyword>
<keyword id="KW-0566">Pantothenate biosynthesis</keyword>
<keyword id="KW-1185">Reference proteome</keyword>
<dbReference type="EC" id="6.3.2.1" evidence="1"/>
<dbReference type="EMBL" id="CP000250">
    <property type="protein sequence ID" value="ABD07093.1"/>
    <property type="molecule type" value="Genomic_DNA"/>
</dbReference>
<dbReference type="RefSeq" id="WP_011441278.1">
    <property type="nucleotide sequence ID" value="NC_007778.1"/>
</dbReference>
<dbReference type="SMR" id="Q2IXG7"/>
<dbReference type="STRING" id="316058.RPB_2388"/>
<dbReference type="KEGG" id="rpb:RPB_2388"/>
<dbReference type="eggNOG" id="COG0414">
    <property type="taxonomic scope" value="Bacteria"/>
</dbReference>
<dbReference type="HOGENOM" id="CLU_047148_0_2_5"/>
<dbReference type="OrthoDB" id="9773087at2"/>
<dbReference type="UniPathway" id="UPA00028">
    <property type="reaction ID" value="UER00005"/>
</dbReference>
<dbReference type="Proteomes" id="UP000008809">
    <property type="component" value="Chromosome"/>
</dbReference>
<dbReference type="GO" id="GO:0005829">
    <property type="term" value="C:cytosol"/>
    <property type="evidence" value="ECO:0007669"/>
    <property type="project" value="TreeGrafter"/>
</dbReference>
<dbReference type="GO" id="GO:0005524">
    <property type="term" value="F:ATP binding"/>
    <property type="evidence" value="ECO:0007669"/>
    <property type="project" value="UniProtKB-KW"/>
</dbReference>
<dbReference type="GO" id="GO:0004592">
    <property type="term" value="F:pantoate-beta-alanine ligase activity"/>
    <property type="evidence" value="ECO:0007669"/>
    <property type="project" value="UniProtKB-UniRule"/>
</dbReference>
<dbReference type="GO" id="GO:0015940">
    <property type="term" value="P:pantothenate biosynthetic process"/>
    <property type="evidence" value="ECO:0007669"/>
    <property type="project" value="UniProtKB-UniRule"/>
</dbReference>
<dbReference type="CDD" id="cd00560">
    <property type="entry name" value="PanC"/>
    <property type="match status" value="1"/>
</dbReference>
<dbReference type="Gene3D" id="3.40.50.620">
    <property type="entry name" value="HUPs"/>
    <property type="match status" value="1"/>
</dbReference>
<dbReference type="Gene3D" id="3.30.1300.10">
    <property type="entry name" value="Pantoate-beta-alanine ligase, C-terminal domain"/>
    <property type="match status" value="1"/>
</dbReference>
<dbReference type="HAMAP" id="MF_00158">
    <property type="entry name" value="PanC"/>
    <property type="match status" value="1"/>
</dbReference>
<dbReference type="InterPro" id="IPR003721">
    <property type="entry name" value="Pantoate_ligase"/>
</dbReference>
<dbReference type="InterPro" id="IPR042176">
    <property type="entry name" value="Pantoate_ligase_C"/>
</dbReference>
<dbReference type="InterPro" id="IPR014729">
    <property type="entry name" value="Rossmann-like_a/b/a_fold"/>
</dbReference>
<dbReference type="NCBIfam" id="TIGR00018">
    <property type="entry name" value="panC"/>
    <property type="match status" value="1"/>
</dbReference>
<dbReference type="PANTHER" id="PTHR21299">
    <property type="entry name" value="CYTIDYLATE KINASE/PANTOATE-BETA-ALANINE LIGASE"/>
    <property type="match status" value="1"/>
</dbReference>
<dbReference type="PANTHER" id="PTHR21299:SF1">
    <property type="entry name" value="PANTOATE--BETA-ALANINE LIGASE"/>
    <property type="match status" value="1"/>
</dbReference>
<dbReference type="Pfam" id="PF02569">
    <property type="entry name" value="Pantoate_ligase"/>
    <property type="match status" value="1"/>
</dbReference>
<dbReference type="SUPFAM" id="SSF52374">
    <property type="entry name" value="Nucleotidylyl transferase"/>
    <property type="match status" value="1"/>
</dbReference>
<protein>
    <recommendedName>
        <fullName evidence="1">Pantothenate synthetase</fullName>
        <shortName evidence="1">PS</shortName>
        <ecNumber evidence="1">6.3.2.1</ecNumber>
    </recommendedName>
    <alternativeName>
        <fullName evidence="1">Pantoate--beta-alanine ligase</fullName>
    </alternativeName>
    <alternativeName>
        <fullName evidence="1">Pantoate-activating enzyme</fullName>
    </alternativeName>
</protein>
<sequence>MPRPPVVARTLPALRRALDDLRRRNATVALVPTMGALHDGHLSLVRLAKRRAAKVVVSVFVNPTQFAPHEDFGSYPRTWKADVAKLAAENVDLIWNPDVKTMYPEGFATRIGVDGPAIAGLEDRFRPHFFGGVATVVGKLFLQVRPDVAIFGSKDFQQLRVVTRMAADLDLGVKVIGAPTIRERDGLAMSSRNVYLTPEQRQVAPTLYRAMKETAKLLKAGRSAEAALAAGAKMITDAGFALDYLEARHAESLAPVGSIKDGPIRLLVAAKLGNTRLIDNVAV</sequence>
<feature type="chain" id="PRO_0000305536" description="Pantothenate synthetase">
    <location>
        <begin position="1"/>
        <end position="283"/>
    </location>
</feature>
<feature type="active site" description="Proton donor" evidence="1">
    <location>
        <position position="41"/>
    </location>
</feature>
<feature type="binding site" evidence="1">
    <location>
        <begin position="34"/>
        <end position="41"/>
    </location>
    <ligand>
        <name>ATP</name>
        <dbReference type="ChEBI" id="CHEBI:30616"/>
    </ligand>
</feature>
<feature type="binding site" evidence="1">
    <location>
        <position position="65"/>
    </location>
    <ligand>
        <name>(R)-pantoate</name>
        <dbReference type="ChEBI" id="CHEBI:15980"/>
    </ligand>
</feature>
<feature type="binding site" evidence="1">
    <location>
        <position position="65"/>
    </location>
    <ligand>
        <name>beta-alanine</name>
        <dbReference type="ChEBI" id="CHEBI:57966"/>
    </ligand>
</feature>
<feature type="binding site" evidence="1">
    <location>
        <begin position="152"/>
        <end position="155"/>
    </location>
    <ligand>
        <name>ATP</name>
        <dbReference type="ChEBI" id="CHEBI:30616"/>
    </ligand>
</feature>
<feature type="binding site" evidence="1">
    <location>
        <position position="158"/>
    </location>
    <ligand>
        <name>(R)-pantoate</name>
        <dbReference type="ChEBI" id="CHEBI:15980"/>
    </ligand>
</feature>
<feature type="binding site" evidence="1">
    <location>
        <position position="181"/>
    </location>
    <ligand>
        <name>ATP</name>
        <dbReference type="ChEBI" id="CHEBI:30616"/>
    </ligand>
</feature>
<feature type="binding site" evidence="1">
    <location>
        <begin position="189"/>
        <end position="192"/>
    </location>
    <ligand>
        <name>ATP</name>
        <dbReference type="ChEBI" id="CHEBI:30616"/>
    </ligand>
</feature>
<comment type="function">
    <text evidence="1">Catalyzes the condensation of pantoate with beta-alanine in an ATP-dependent reaction via a pantoyl-adenylate intermediate.</text>
</comment>
<comment type="catalytic activity">
    <reaction evidence="1">
        <text>(R)-pantoate + beta-alanine + ATP = (R)-pantothenate + AMP + diphosphate + H(+)</text>
        <dbReference type="Rhea" id="RHEA:10912"/>
        <dbReference type="ChEBI" id="CHEBI:15378"/>
        <dbReference type="ChEBI" id="CHEBI:15980"/>
        <dbReference type="ChEBI" id="CHEBI:29032"/>
        <dbReference type="ChEBI" id="CHEBI:30616"/>
        <dbReference type="ChEBI" id="CHEBI:33019"/>
        <dbReference type="ChEBI" id="CHEBI:57966"/>
        <dbReference type="ChEBI" id="CHEBI:456215"/>
        <dbReference type="EC" id="6.3.2.1"/>
    </reaction>
</comment>
<comment type="pathway">
    <text evidence="1">Cofactor biosynthesis; (R)-pantothenate biosynthesis; (R)-pantothenate from (R)-pantoate and beta-alanine: step 1/1.</text>
</comment>
<comment type="subunit">
    <text evidence="1">Homodimer.</text>
</comment>
<comment type="subcellular location">
    <subcellularLocation>
        <location evidence="1">Cytoplasm</location>
    </subcellularLocation>
</comment>
<comment type="miscellaneous">
    <text evidence="1">The reaction proceeds by a bi uni uni bi ping pong mechanism.</text>
</comment>
<comment type="similarity">
    <text evidence="1">Belongs to the pantothenate synthetase family.</text>
</comment>
<evidence type="ECO:0000255" key="1">
    <source>
        <dbReference type="HAMAP-Rule" id="MF_00158"/>
    </source>
</evidence>
<gene>
    <name evidence="1" type="primary">panC</name>
    <name type="ordered locus">RPB_2388</name>
</gene>